<accession>O42038</accession>
<organism>
    <name type="scientific">Human respiratory syncytial virus B (strain B1)</name>
    <dbReference type="NCBI Taxonomy" id="79692"/>
    <lineage>
        <taxon>Viruses</taxon>
        <taxon>Riboviria</taxon>
        <taxon>Orthornavirae</taxon>
        <taxon>Negarnaviricota</taxon>
        <taxon>Haploviricotina</taxon>
        <taxon>Monjiviricetes</taxon>
        <taxon>Mononegavirales</taxon>
        <taxon>Pneumoviridae</taxon>
        <taxon>Orthopneumovirus</taxon>
        <taxon>Orthopneumovirus hominis</taxon>
    </lineage>
</organism>
<proteinExistence type="inferred from homology"/>
<keyword id="KW-1045">Host mitochondrion</keyword>
<keyword id="KW-0945">Host-virus interaction</keyword>
<keyword id="KW-1090">Inhibition of host innate immune response by virus</keyword>
<keyword id="KW-1114">Inhibition of host interferon signaling pathway by virus</keyword>
<keyword id="KW-1092">Inhibition of host IRF3 by virus</keyword>
<keyword id="KW-1093">Inhibition of host IRF7 by virus</keyword>
<keyword id="KW-1088">Inhibition of host RIG-I by virus</keyword>
<keyword id="KW-1113">Inhibition of host RLR pathway by virus</keyword>
<keyword id="KW-1106">Inhibition of host STAT2 by virus</keyword>
<keyword id="KW-1223">Inhibition of host TBK1 by virus</keyword>
<keyword id="KW-1225">Inhibition of host TLR pathway by virus</keyword>
<keyword id="KW-0922">Interferon antiviral system evasion</keyword>
<keyword id="KW-1119">Modulation of host cell apoptosis by virus</keyword>
<keyword id="KW-1185">Reference proteome</keyword>
<keyword id="KW-0899">Viral immunoevasion</keyword>
<evidence type="ECO:0000250" key="1">
    <source>
        <dbReference type="UniProtKB" id="P04543"/>
    </source>
</evidence>
<evidence type="ECO:0000305" key="2"/>
<feature type="chain" id="PRO_0000142790" description="Non-structural protein 2">
    <location>
        <begin position="1"/>
        <end position="124"/>
    </location>
</feature>
<feature type="short sequence motif" description="DLNP; interaction with MAP1B" evidence="1">
    <location>
        <begin position="121"/>
        <end position="124"/>
    </location>
</feature>
<name>NS2_HRSVB</name>
<sequence length="124" mass="14567">MSTTNDNTTMQRLMITDMRPLSMDSIITSLTKEIITHKFIYLINNECIVRKLDERQATFTFLVNYEMKLLHKVGSTKYKKYTEYNTKYGTFPMPIFINHGGFLECIGIKPTKHTPIIYKYDLNP</sequence>
<comment type="function">
    <text evidence="1">Plays a major role in antagonizing the type I IFN-mediated antiviral response. Acts cooperatively with NS1 to repress activation and nuclear translocation of host IFN-regulatory factor IRF3. Interacts with the host cytoplasmic sensor of viral nucleic acids RIGI and prevents the interaction with its downstream partner MAVS. Together with NS2, participates in the proteasomal degradation of host STAT2, IRF3, IRF7, TBK1 and RIGI through a NS-degradasome involving CUL2 and Elongin-C. The degradasome requires an intact mitochondrial MAVS. Induces host SOCS1 expression. Induces activation of NF-kappa-B. Suppresses premature apoptosis by an NF-kappa-B-dependent, interferon-independent mechanism promoting continued viral replication.</text>
</comment>
<comment type="subunit">
    <text evidence="1">Monomer (instable). Homomultimer. Heteromultimer with NS1. Interacts with host RIGI (via N-terminus); this interaction prevents host signaling pathway involved in interferon production. Interacts with host MAP1B/microtubule-associated protein 1B.</text>
</comment>
<comment type="subcellular location">
    <subcellularLocation>
        <location evidence="1">Host mitochondrion</location>
    </subcellularLocation>
    <text evidence="1">Most NS2 resides in the mitochondria as a heteromer with NS1.</text>
</comment>
<comment type="domain">
    <text evidence="1">The DNLP motif has IFN suppressive functions like binding to host MAP1B.</text>
</comment>
<comment type="similarity">
    <text evidence="2">Belongs to the pneumovirus non-structural protein 2 family.</text>
</comment>
<protein>
    <recommendedName>
        <fullName>Non-structural protein 2</fullName>
        <shortName>NS2</shortName>
    </recommendedName>
    <alternativeName>
        <fullName>Non-structural protein 1B</fullName>
    </alternativeName>
</protein>
<gene>
    <name type="primary">1B</name>
    <name type="synonym">NS2</name>
</gene>
<organismHost>
    <name type="scientific">Homo sapiens</name>
    <name type="common">Human</name>
    <dbReference type="NCBI Taxonomy" id="9606"/>
</organismHost>
<dbReference type="EMBL" id="AF013254">
    <property type="protein sequence ID" value="AAB82430.1"/>
    <property type="molecule type" value="Genomic_RNA"/>
</dbReference>
<dbReference type="EMBL" id="AF013255">
    <property type="protein sequence ID" value="AAB82441.1"/>
    <property type="molecule type" value="Genomic_RNA"/>
</dbReference>
<dbReference type="RefSeq" id="NP_056857.1">
    <property type="nucleotide sequence ID" value="NC_001781.1"/>
</dbReference>
<dbReference type="SMR" id="O42038"/>
<dbReference type="GeneID" id="1489819"/>
<dbReference type="KEGG" id="vg:1489819"/>
<dbReference type="Proteomes" id="UP000002472">
    <property type="component" value="Segment"/>
</dbReference>
<dbReference type="Proteomes" id="UP000180717">
    <property type="component" value="Genome"/>
</dbReference>
<dbReference type="GO" id="GO:0033650">
    <property type="term" value="C:host cell mitochondrion"/>
    <property type="evidence" value="ECO:0007669"/>
    <property type="project" value="UniProtKB-SubCell"/>
</dbReference>
<dbReference type="GO" id="GO:0052150">
    <property type="term" value="P:symbiont-mediated perturbation of host apoptosis"/>
    <property type="evidence" value="ECO:0007669"/>
    <property type="project" value="UniProtKB-KW"/>
</dbReference>
<dbReference type="GO" id="GO:0039548">
    <property type="term" value="P:symbiont-mediated suppression of host cytoplasmic pattern recognition receptor signaling pathway via inhibition of IRF3 activity"/>
    <property type="evidence" value="ECO:0007669"/>
    <property type="project" value="UniProtKB-KW"/>
</dbReference>
<dbReference type="GO" id="GO:0039557">
    <property type="term" value="P:symbiont-mediated suppression of host cytoplasmic pattern recognition receptor signaling pathway via inhibition of IRF7 activity"/>
    <property type="evidence" value="ECO:0007669"/>
    <property type="project" value="UniProtKB-KW"/>
</dbReference>
<dbReference type="GO" id="GO:0039540">
    <property type="term" value="P:symbiont-mediated suppression of host cytoplasmic pattern recognition receptor signaling pathway via inhibition of RIG-I activity"/>
    <property type="evidence" value="ECO:0007669"/>
    <property type="project" value="UniProtKB-KW"/>
</dbReference>
<dbReference type="GO" id="GO:0039723">
    <property type="term" value="P:symbiont-mediated suppression of host cytoplasmic pattern recognition receptor signaling pathway via inhibition of TBK1 activity"/>
    <property type="evidence" value="ECO:0007669"/>
    <property type="project" value="UniProtKB-KW"/>
</dbReference>
<dbReference type="GO" id="GO:0039564">
    <property type="term" value="P:symbiont-mediated suppression of host JAK-STAT cascade via inhibition of STAT2 activity"/>
    <property type="evidence" value="ECO:0007669"/>
    <property type="project" value="UniProtKB-KW"/>
</dbReference>
<dbReference type="GO" id="GO:0039722">
    <property type="term" value="P:symbiont-mediated suppression of host toll-like receptor signaling pathway"/>
    <property type="evidence" value="ECO:0007669"/>
    <property type="project" value="UniProtKB-KW"/>
</dbReference>
<dbReference type="GO" id="GO:0039502">
    <property type="term" value="P:symbiont-mediated suppression of host type I interferon-mediated signaling pathway"/>
    <property type="evidence" value="ECO:0007669"/>
    <property type="project" value="UniProtKB-KW"/>
</dbReference>
<dbReference type="InterPro" id="IPR004336">
    <property type="entry name" value="RSV_NS2"/>
</dbReference>
<dbReference type="Pfam" id="PF03113">
    <property type="entry name" value="RSV_NS2"/>
    <property type="match status" value="1"/>
</dbReference>
<reference key="1">
    <citation type="submission" date="1997-07" db="EMBL/GenBank/DDBJ databases">
        <authorList>
            <person name="Karron R.A."/>
            <person name="Buonagurio D.A."/>
            <person name="Georgiu A.F."/>
            <person name="Whitehead S.S."/>
            <person name="Adamus J.E."/>
            <person name="Clements-Mann M.L."/>
            <person name="Harris D.O."/>
            <person name="Randolph V.B."/>
            <person name="Udem S.A."/>
            <person name="Murphy B.R."/>
            <person name="Sidhu M.S."/>
        </authorList>
    </citation>
    <scope>NUCLEOTIDE SEQUENCE [GENOMIC RNA]</scope>
</reference>
<reference key="2">
    <citation type="journal article" date="2019" name="PLoS Pathog.">
        <title>Respiratory syncytial virus nonstructural proteins 1 and 2: Exceptional disrupters of innate immune responses.</title>
        <authorList>
            <person name="Sedeyn K."/>
            <person name="Schepens B."/>
            <person name="Saelens X."/>
        </authorList>
    </citation>
    <scope>REVIEW</scope>
</reference>
<reference key="3">
    <citation type="journal article" date="2020" name="Front. Cell. Infect. Microbiol.">
        <title>Respiratory Syncytial Virus's Non-structural Proteins: Masters of Interference.</title>
        <authorList>
            <person name="Thornhill E.M."/>
            <person name="Verhoeven D."/>
        </authorList>
    </citation>
    <scope>REVIEW</scope>
</reference>